<feature type="chain" id="PRO_1000147713" description="Chaperone protein HscA homolog">
    <location>
        <begin position="1"/>
        <end position="622"/>
    </location>
</feature>
<keyword id="KW-0067">ATP-binding</keyword>
<keyword id="KW-0143">Chaperone</keyword>
<keyword id="KW-0547">Nucleotide-binding</keyword>
<keyword id="KW-1185">Reference proteome</keyword>
<comment type="function">
    <text evidence="1">Chaperone involved in the maturation of iron-sulfur cluster-containing proteins. Has a low intrinsic ATPase activity which is markedly stimulated by HscB.</text>
</comment>
<comment type="similarity">
    <text evidence="1">Belongs to the heat shock protein 70 family.</text>
</comment>
<accession>B9MIT4</accession>
<name>HSCA_ACIET</name>
<protein>
    <recommendedName>
        <fullName evidence="1">Chaperone protein HscA homolog</fullName>
    </recommendedName>
</protein>
<proteinExistence type="inferred from homology"/>
<gene>
    <name evidence="1" type="primary">hscA</name>
    <name type="ordered locus">Dtpsy_1642</name>
</gene>
<reference key="1">
    <citation type="submission" date="2009-01" db="EMBL/GenBank/DDBJ databases">
        <title>Complete sequence of Diaphorobacter sp. TPSY.</title>
        <authorList>
            <consortium name="US DOE Joint Genome Institute"/>
            <person name="Lucas S."/>
            <person name="Copeland A."/>
            <person name="Lapidus A."/>
            <person name="Glavina del Rio T."/>
            <person name="Tice H."/>
            <person name="Bruce D."/>
            <person name="Goodwin L."/>
            <person name="Pitluck S."/>
            <person name="Chertkov O."/>
            <person name="Brettin T."/>
            <person name="Detter J.C."/>
            <person name="Han C."/>
            <person name="Larimer F."/>
            <person name="Land M."/>
            <person name="Hauser L."/>
            <person name="Kyrpides N."/>
            <person name="Mikhailova N."/>
            <person name="Coates J.D."/>
        </authorList>
    </citation>
    <scope>NUCLEOTIDE SEQUENCE [LARGE SCALE GENOMIC DNA]</scope>
    <source>
        <strain>TPSY</strain>
    </source>
</reference>
<sequence length="622" mass="65375">MALLQISEPGQSPDPHQRRVAIGIDLGTTHSLVAAVRNGVAECLPDAQGRVLLPSVVRYLGGGGRQIGYEAAAAQMQDPANTVSSVKRFMGRGLGDITGREKLPYDFIAAADSGGMLSLSTAAGVKSPVEVSAEILATLRYRAEDSFDSDLYGAVITVPAYFDDAQRQATKDAAHLAGLNLLRLINEPTAAAIAYGLDNGAEGVYAVYDLGGGTFDISVLRLAQGVFEVIATGGDSALGGDDYDAALAEWVMQQTGVRASTPEDKTSVRLAARACKEALTATDNVAFTADVAGATVQFDVKREDFAAVTAELTQRSLAAVRRTLRDAQIERDEVKGVVLVGGSTRMPVVRAAVAEFFGREPLTNLNPDEVVAIGAAIQANQLAGNDAAGDLLLLDVIPLSLGIETMGGLVERIIGRNETIPTAKAQDFTTYKDGQTALAIHVVQGERDLVQDCRSLARFELRGIPPMAAGAARIRVTFTVDADGLLSVAAREQASGVEARIDVKPSYGLSDEQIARMLQEGFATAQQDMQTRALVEARVDADRLLIATQSALDVDGDVLAAAERTAIDDLMHALRATLETSTDAAAVEAAAQALAKGTEAFAAQRMNRGIRQALAGKNVSAL</sequence>
<evidence type="ECO:0000255" key="1">
    <source>
        <dbReference type="HAMAP-Rule" id="MF_00679"/>
    </source>
</evidence>
<organism>
    <name type="scientific">Acidovorax ebreus (strain TPSY)</name>
    <name type="common">Diaphorobacter sp. (strain TPSY)</name>
    <dbReference type="NCBI Taxonomy" id="535289"/>
    <lineage>
        <taxon>Bacteria</taxon>
        <taxon>Pseudomonadati</taxon>
        <taxon>Pseudomonadota</taxon>
        <taxon>Betaproteobacteria</taxon>
        <taxon>Burkholderiales</taxon>
        <taxon>Comamonadaceae</taxon>
        <taxon>Diaphorobacter</taxon>
    </lineage>
</organism>
<dbReference type="EMBL" id="CP001392">
    <property type="protein sequence ID" value="ACM33100.1"/>
    <property type="molecule type" value="Genomic_DNA"/>
</dbReference>
<dbReference type="RefSeq" id="WP_015913192.1">
    <property type="nucleotide sequence ID" value="NC_011992.1"/>
</dbReference>
<dbReference type="SMR" id="B9MIT4"/>
<dbReference type="KEGG" id="dia:Dtpsy_1642"/>
<dbReference type="eggNOG" id="COG0443">
    <property type="taxonomic scope" value="Bacteria"/>
</dbReference>
<dbReference type="HOGENOM" id="CLU_005965_2_3_4"/>
<dbReference type="Proteomes" id="UP000000450">
    <property type="component" value="Chromosome"/>
</dbReference>
<dbReference type="GO" id="GO:0005524">
    <property type="term" value="F:ATP binding"/>
    <property type="evidence" value="ECO:0007669"/>
    <property type="project" value="UniProtKB-KW"/>
</dbReference>
<dbReference type="GO" id="GO:0016887">
    <property type="term" value="F:ATP hydrolysis activity"/>
    <property type="evidence" value="ECO:0007669"/>
    <property type="project" value="UniProtKB-UniRule"/>
</dbReference>
<dbReference type="GO" id="GO:0140662">
    <property type="term" value="F:ATP-dependent protein folding chaperone"/>
    <property type="evidence" value="ECO:0007669"/>
    <property type="project" value="InterPro"/>
</dbReference>
<dbReference type="GO" id="GO:0051082">
    <property type="term" value="F:unfolded protein binding"/>
    <property type="evidence" value="ECO:0007669"/>
    <property type="project" value="InterPro"/>
</dbReference>
<dbReference type="GO" id="GO:0016226">
    <property type="term" value="P:iron-sulfur cluster assembly"/>
    <property type="evidence" value="ECO:0007669"/>
    <property type="project" value="InterPro"/>
</dbReference>
<dbReference type="FunFam" id="3.30.420.40:FF:000046">
    <property type="entry name" value="Chaperone protein HscA"/>
    <property type="match status" value="1"/>
</dbReference>
<dbReference type="FunFam" id="2.60.34.10:FF:000005">
    <property type="entry name" value="Chaperone protein HscA homolog"/>
    <property type="match status" value="1"/>
</dbReference>
<dbReference type="Gene3D" id="1.20.1270.10">
    <property type="match status" value="1"/>
</dbReference>
<dbReference type="Gene3D" id="3.30.420.40">
    <property type="match status" value="2"/>
</dbReference>
<dbReference type="Gene3D" id="3.90.640.10">
    <property type="entry name" value="Actin, Chain A, domain 4"/>
    <property type="match status" value="1"/>
</dbReference>
<dbReference type="Gene3D" id="2.60.34.10">
    <property type="entry name" value="Substrate Binding Domain Of DNAk, Chain A, domain 1"/>
    <property type="match status" value="1"/>
</dbReference>
<dbReference type="HAMAP" id="MF_00679">
    <property type="entry name" value="HscA"/>
    <property type="match status" value="1"/>
</dbReference>
<dbReference type="InterPro" id="IPR043129">
    <property type="entry name" value="ATPase_NBD"/>
</dbReference>
<dbReference type="InterPro" id="IPR018181">
    <property type="entry name" value="Heat_shock_70_CS"/>
</dbReference>
<dbReference type="InterPro" id="IPR029048">
    <property type="entry name" value="HSP70_C_sf"/>
</dbReference>
<dbReference type="InterPro" id="IPR029047">
    <property type="entry name" value="HSP70_peptide-bd_sf"/>
</dbReference>
<dbReference type="InterPro" id="IPR013126">
    <property type="entry name" value="Hsp_70_fam"/>
</dbReference>
<dbReference type="InterPro" id="IPR010236">
    <property type="entry name" value="ISC_FeS_clus_asmbl_HscA"/>
</dbReference>
<dbReference type="NCBIfam" id="TIGR01991">
    <property type="entry name" value="HscA"/>
    <property type="match status" value="1"/>
</dbReference>
<dbReference type="NCBIfam" id="NF003520">
    <property type="entry name" value="PRK05183.1"/>
    <property type="match status" value="1"/>
</dbReference>
<dbReference type="PANTHER" id="PTHR19375">
    <property type="entry name" value="HEAT SHOCK PROTEIN 70KDA"/>
    <property type="match status" value="1"/>
</dbReference>
<dbReference type="Pfam" id="PF00012">
    <property type="entry name" value="HSP70"/>
    <property type="match status" value="1"/>
</dbReference>
<dbReference type="PRINTS" id="PR00301">
    <property type="entry name" value="HEATSHOCK70"/>
</dbReference>
<dbReference type="SUPFAM" id="SSF53067">
    <property type="entry name" value="Actin-like ATPase domain"/>
    <property type="match status" value="2"/>
</dbReference>
<dbReference type="SUPFAM" id="SSF100934">
    <property type="entry name" value="Heat shock protein 70kD (HSP70), C-terminal subdomain"/>
    <property type="match status" value="1"/>
</dbReference>
<dbReference type="SUPFAM" id="SSF100920">
    <property type="entry name" value="Heat shock protein 70kD (HSP70), peptide-binding domain"/>
    <property type="match status" value="1"/>
</dbReference>
<dbReference type="PROSITE" id="PS00297">
    <property type="entry name" value="HSP70_1"/>
    <property type="match status" value="1"/>
</dbReference>
<dbReference type="PROSITE" id="PS00329">
    <property type="entry name" value="HSP70_2"/>
    <property type="match status" value="1"/>
</dbReference>
<dbReference type="PROSITE" id="PS01036">
    <property type="entry name" value="HSP70_3"/>
    <property type="match status" value="1"/>
</dbReference>